<name>ARGB_THESQ</name>
<proteinExistence type="inferred from homology"/>
<gene>
    <name evidence="1" type="primary">argB</name>
    <name type="ordered locus">TRQ2_1041</name>
</gene>
<feature type="chain" id="PRO_1000092892" description="Acetylglutamate kinase">
    <location>
        <begin position="1"/>
        <end position="282"/>
    </location>
</feature>
<feature type="binding site" evidence="1">
    <location>
        <begin position="62"/>
        <end position="63"/>
    </location>
    <ligand>
        <name>substrate</name>
    </ligand>
</feature>
<feature type="binding site" evidence="1">
    <location>
        <position position="84"/>
    </location>
    <ligand>
        <name>substrate</name>
    </ligand>
</feature>
<feature type="binding site" evidence="1">
    <location>
        <position position="178"/>
    </location>
    <ligand>
        <name>substrate</name>
    </ligand>
</feature>
<feature type="site" description="Transition state stabilizer" evidence="1">
    <location>
        <position position="27"/>
    </location>
</feature>
<feature type="site" description="Transition state stabilizer" evidence="1">
    <location>
        <position position="237"/>
    </location>
</feature>
<evidence type="ECO:0000255" key="1">
    <source>
        <dbReference type="HAMAP-Rule" id="MF_00082"/>
    </source>
</evidence>
<sequence length="282" mass="30345">MRIDTVNVLLEALPYIKEFYGKTFVIKFGGSAMKQENAKKAFIQDIILLKYTGIKPIIVHGGGPAISQMMKDLGIEPVFKNGHRVTDEKTMEIVEMVLVGKINKEIVMNLNLHGGRAVGICGKDSKLIVAEKETKHGDIGYVGKVKKVNPEILHALIENDYIPVIAPVGIGEDGHSYNINADTAAAEIAKSLMAEKLILLTDVDGVLKGDKLISTLTPDEAEELIRDGTVTGGMIPKVECAVSAVRGGVGAVHIINGGLEHAILLEIFSRKGIGTMIKELEG</sequence>
<dbReference type="EC" id="2.7.2.8" evidence="1"/>
<dbReference type="EMBL" id="CP000969">
    <property type="protein sequence ID" value="ACB09388.1"/>
    <property type="molecule type" value="Genomic_DNA"/>
</dbReference>
<dbReference type="RefSeq" id="WP_012310900.1">
    <property type="nucleotide sequence ID" value="NC_010483.1"/>
</dbReference>
<dbReference type="SMR" id="B1LAP0"/>
<dbReference type="KEGG" id="trq:TRQ2_1041"/>
<dbReference type="HOGENOM" id="CLU_053680_0_0_0"/>
<dbReference type="UniPathway" id="UPA00068">
    <property type="reaction ID" value="UER00107"/>
</dbReference>
<dbReference type="Proteomes" id="UP000001687">
    <property type="component" value="Chromosome"/>
</dbReference>
<dbReference type="GO" id="GO:0005737">
    <property type="term" value="C:cytoplasm"/>
    <property type="evidence" value="ECO:0007669"/>
    <property type="project" value="UniProtKB-SubCell"/>
</dbReference>
<dbReference type="GO" id="GO:0003991">
    <property type="term" value="F:acetylglutamate kinase activity"/>
    <property type="evidence" value="ECO:0007669"/>
    <property type="project" value="UniProtKB-UniRule"/>
</dbReference>
<dbReference type="GO" id="GO:0005524">
    <property type="term" value="F:ATP binding"/>
    <property type="evidence" value="ECO:0007669"/>
    <property type="project" value="UniProtKB-UniRule"/>
</dbReference>
<dbReference type="GO" id="GO:0042450">
    <property type="term" value="P:arginine biosynthetic process via ornithine"/>
    <property type="evidence" value="ECO:0007669"/>
    <property type="project" value="UniProtKB-UniRule"/>
</dbReference>
<dbReference type="GO" id="GO:0006526">
    <property type="term" value="P:L-arginine biosynthetic process"/>
    <property type="evidence" value="ECO:0007669"/>
    <property type="project" value="UniProtKB-UniPathway"/>
</dbReference>
<dbReference type="CDD" id="cd04250">
    <property type="entry name" value="AAK_NAGK-C"/>
    <property type="match status" value="1"/>
</dbReference>
<dbReference type="FunFam" id="3.40.1160.10:FF:000004">
    <property type="entry name" value="Acetylglutamate kinase"/>
    <property type="match status" value="1"/>
</dbReference>
<dbReference type="Gene3D" id="3.40.1160.10">
    <property type="entry name" value="Acetylglutamate kinase-like"/>
    <property type="match status" value="1"/>
</dbReference>
<dbReference type="HAMAP" id="MF_00082">
    <property type="entry name" value="ArgB"/>
    <property type="match status" value="1"/>
</dbReference>
<dbReference type="InterPro" id="IPR036393">
    <property type="entry name" value="AceGlu_kinase-like_sf"/>
</dbReference>
<dbReference type="InterPro" id="IPR004662">
    <property type="entry name" value="AcgluKinase_fam"/>
</dbReference>
<dbReference type="InterPro" id="IPR037528">
    <property type="entry name" value="ArgB"/>
</dbReference>
<dbReference type="InterPro" id="IPR001048">
    <property type="entry name" value="Asp/Glu/Uridylate_kinase"/>
</dbReference>
<dbReference type="InterPro" id="IPR001057">
    <property type="entry name" value="Glu/AcGlu_kinase"/>
</dbReference>
<dbReference type="InterPro" id="IPR041727">
    <property type="entry name" value="NAGK-C"/>
</dbReference>
<dbReference type="NCBIfam" id="TIGR00761">
    <property type="entry name" value="argB"/>
    <property type="match status" value="1"/>
</dbReference>
<dbReference type="PANTHER" id="PTHR23342">
    <property type="entry name" value="N-ACETYLGLUTAMATE SYNTHASE"/>
    <property type="match status" value="1"/>
</dbReference>
<dbReference type="PANTHER" id="PTHR23342:SF0">
    <property type="entry name" value="N-ACETYLGLUTAMATE SYNTHASE, MITOCHONDRIAL"/>
    <property type="match status" value="1"/>
</dbReference>
<dbReference type="Pfam" id="PF00696">
    <property type="entry name" value="AA_kinase"/>
    <property type="match status" value="1"/>
</dbReference>
<dbReference type="PIRSF" id="PIRSF000728">
    <property type="entry name" value="NAGK"/>
    <property type="match status" value="1"/>
</dbReference>
<dbReference type="PRINTS" id="PR00474">
    <property type="entry name" value="GLU5KINASE"/>
</dbReference>
<dbReference type="SUPFAM" id="SSF53633">
    <property type="entry name" value="Carbamate kinase-like"/>
    <property type="match status" value="1"/>
</dbReference>
<protein>
    <recommendedName>
        <fullName evidence="1">Acetylglutamate kinase</fullName>
        <ecNumber evidence="1">2.7.2.8</ecNumber>
    </recommendedName>
    <alternativeName>
        <fullName evidence="1">N-acetyl-L-glutamate 5-phosphotransferase</fullName>
    </alternativeName>
    <alternativeName>
        <fullName evidence="1">NAG kinase</fullName>
        <shortName evidence="1">NAGK</shortName>
    </alternativeName>
</protein>
<organism>
    <name type="scientific">Thermotoga sp. (strain RQ2)</name>
    <dbReference type="NCBI Taxonomy" id="126740"/>
    <lineage>
        <taxon>Bacteria</taxon>
        <taxon>Thermotogati</taxon>
        <taxon>Thermotogota</taxon>
        <taxon>Thermotogae</taxon>
        <taxon>Thermotogales</taxon>
        <taxon>Thermotogaceae</taxon>
        <taxon>Thermotoga</taxon>
    </lineage>
</organism>
<comment type="function">
    <text evidence="1">Catalyzes the ATP-dependent phosphorylation of N-acetyl-L-glutamate.</text>
</comment>
<comment type="catalytic activity">
    <reaction evidence="1">
        <text>N-acetyl-L-glutamate + ATP = N-acetyl-L-glutamyl 5-phosphate + ADP</text>
        <dbReference type="Rhea" id="RHEA:14629"/>
        <dbReference type="ChEBI" id="CHEBI:30616"/>
        <dbReference type="ChEBI" id="CHEBI:44337"/>
        <dbReference type="ChEBI" id="CHEBI:57936"/>
        <dbReference type="ChEBI" id="CHEBI:456216"/>
        <dbReference type="EC" id="2.7.2.8"/>
    </reaction>
</comment>
<comment type="pathway">
    <text evidence="1">Amino-acid biosynthesis; L-arginine biosynthesis; N(2)-acetyl-L-ornithine from L-glutamate: step 2/4.</text>
</comment>
<comment type="subcellular location">
    <subcellularLocation>
        <location evidence="1">Cytoplasm</location>
    </subcellularLocation>
</comment>
<comment type="similarity">
    <text evidence="1">Belongs to the acetylglutamate kinase family. ArgB subfamily.</text>
</comment>
<reference key="1">
    <citation type="journal article" date="2011" name="J. Bacteriol.">
        <title>Genome sequence of Thermotoga sp. strain RQ2, a hyperthermophilic bacterium isolated from a geothermally heated region of the seafloor near Ribeira Quente, the Azores.</title>
        <authorList>
            <person name="Swithers K.S."/>
            <person name="DiPippo J.L."/>
            <person name="Bruce D.C."/>
            <person name="Detter C."/>
            <person name="Tapia R."/>
            <person name="Han S."/>
            <person name="Saunders E."/>
            <person name="Goodwin L.A."/>
            <person name="Han J."/>
            <person name="Woyke T."/>
            <person name="Pitluck S."/>
            <person name="Pennacchio L."/>
            <person name="Nolan M."/>
            <person name="Mikhailova N."/>
            <person name="Lykidis A."/>
            <person name="Land M.L."/>
            <person name="Brettin T."/>
            <person name="Stetter K.O."/>
            <person name="Nelson K.E."/>
            <person name="Gogarten J.P."/>
            <person name="Noll K.M."/>
        </authorList>
    </citation>
    <scope>NUCLEOTIDE SEQUENCE [LARGE SCALE GENOMIC DNA]</scope>
    <source>
        <strain>RQ2</strain>
    </source>
</reference>
<keyword id="KW-0028">Amino-acid biosynthesis</keyword>
<keyword id="KW-0055">Arginine biosynthesis</keyword>
<keyword id="KW-0067">ATP-binding</keyword>
<keyword id="KW-0963">Cytoplasm</keyword>
<keyword id="KW-0418">Kinase</keyword>
<keyword id="KW-0547">Nucleotide-binding</keyword>
<keyword id="KW-0808">Transferase</keyword>
<accession>B1LAP0</accession>